<proteinExistence type="inferred from homology"/>
<organism>
    <name type="scientific">Shewanella sp. (strain ANA-3)</name>
    <dbReference type="NCBI Taxonomy" id="94122"/>
    <lineage>
        <taxon>Bacteria</taxon>
        <taxon>Pseudomonadati</taxon>
        <taxon>Pseudomonadota</taxon>
        <taxon>Gammaproteobacteria</taxon>
        <taxon>Alteromonadales</taxon>
        <taxon>Shewanellaceae</taxon>
        <taxon>Shewanella</taxon>
    </lineage>
</organism>
<feature type="chain" id="PRO_1000047861" description="Probable septum site-determining protein MinC">
    <location>
        <begin position="1"/>
        <end position="221"/>
    </location>
</feature>
<gene>
    <name evidence="1" type="primary">minC</name>
    <name type="ordered locus">Shewana3_2382</name>
</gene>
<protein>
    <recommendedName>
        <fullName evidence="1">Probable septum site-determining protein MinC</fullName>
    </recommendedName>
</protein>
<reference key="1">
    <citation type="submission" date="2006-09" db="EMBL/GenBank/DDBJ databases">
        <title>Complete sequence of chromosome 1 of Shewanella sp. ANA-3.</title>
        <authorList>
            <person name="Copeland A."/>
            <person name="Lucas S."/>
            <person name="Lapidus A."/>
            <person name="Barry K."/>
            <person name="Detter J.C."/>
            <person name="Glavina del Rio T."/>
            <person name="Hammon N."/>
            <person name="Israni S."/>
            <person name="Dalin E."/>
            <person name="Tice H."/>
            <person name="Pitluck S."/>
            <person name="Chertkov O."/>
            <person name="Brettin T."/>
            <person name="Bruce D."/>
            <person name="Han C."/>
            <person name="Tapia R."/>
            <person name="Gilna P."/>
            <person name="Schmutz J."/>
            <person name="Larimer F."/>
            <person name="Land M."/>
            <person name="Hauser L."/>
            <person name="Kyrpides N."/>
            <person name="Kim E."/>
            <person name="Newman D."/>
            <person name="Salticov C."/>
            <person name="Konstantinidis K."/>
            <person name="Klappenback J."/>
            <person name="Tiedje J."/>
            <person name="Richardson P."/>
        </authorList>
    </citation>
    <scope>NUCLEOTIDE SEQUENCE [LARGE SCALE GENOMIC DNA]</scope>
    <source>
        <strain>ANA-3</strain>
    </source>
</reference>
<comment type="function">
    <text evidence="1">Cell division inhibitor that blocks the formation of polar Z ring septums. Rapidly oscillates between the poles of the cell to destabilize FtsZ filaments that have formed before they mature into polar Z rings. Prevents FtsZ polymerization.</text>
</comment>
<comment type="subunit">
    <text evidence="1">Interacts with MinD and FtsZ.</text>
</comment>
<comment type="similarity">
    <text evidence="1">Belongs to the MinC family.</text>
</comment>
<sequence>MSKPSLELKGASFTLSVLHINSSDLNAVMAELDSKLAQAPQFFLGAPLVVNLSAIQDNDFNLHGLKELLLSRQLVIVGITGATTALSNQAKTLGLAIVKAGKQSVTPPPAPRQTKVLKQNIRSGQQVYAKNGDLIIFGAVGNGAEVIADGSIHIYGALRGKAMAGAAGDSSAVIIAHSLEAELVSIAGQYWLAENLQQHSSDKSGCIRLNGESLIVESLPL</sequence>
<dbReference type="EMBL" id="CP000469">
    <property type="protein sequence ID" value="ABK48611.1"/>
    <property type="molecule type" value="Genomic_DNA"/>
</dbReference>
<dbReference type="RefSeq" id="WP_011717312.1">
    <property type="nucleotide sequence ID" value="NC_008577.1"/>
</dbReference>
<dbReference type="SMR" id="A0KXU2"/>
<dbReference type="STRING" id="94122.Shewana3_2382"/>
<dbReference type="GeneID" id="94728261"/>
<dbReference type="KEGG" id="shn:Shewana3_2382"/>
<dbReference type="eggNOG" id="COG0850">
    <property type="taxonomic scope" value="Bacteria"/>
</dbReference>
<dbReference type="HOGENOM" id="CLU_067812_0_1_6"/>
<dbReference type="OrthoDB" id="9794530at2"/>
<dbReference type="Proteomes" id="UP000002589">
    <property type="component" value="Chromosome"/>
</dbReference>
<dbReference type="GO" id="GO:0000902">
    <property type="term" value="P:cell morphogenesis"/>
    <property type="evidence" value="ECO:0007669"/>
    <property type="project" value="InterPro"/>
</dbReference>
<dbReference type="GO" id="GO:0000917">
    <property type="term" value="P:division septum assembly"/>
    <property type="evidence" value="ECO:0007669"/>
    <property type="project" value="UniProtKB-KW"/>
</dbReference>
<dbReference type="GO" id="GO:0051302">
    <property type="term" value="P:regulation of cell division"/>
    <property type="evidence" value="ECO:0007669"/>
    <property type="project" value="InterPro"/>
</dbReference>
<dbReference type="GO" id="GO:1901891">
    <property type="term" value="P:regulation of cell septum assembly"/>
    <property type="evidence" value="ECO:0007669"/>
    <property type="project" value="InterPro"/>
</dbReference>
<dbReference type="Gene3D" id="2.160.20.70">
    <property type="match status" value="1"/>
</dbReference>
<dbReference type="Gene3D" id="3.30.70.260">
    <property type="match status" value="1"/>
</dbReference>
<dbReference type="HAMAP" id="MF_00267">
    <property type="entry name" value="MinC"/>
    <property type="match status" value="1"/>
</dbReference>
<dbReference type="InterPro" id="IPR016098">
    <property type="entry name" value="CAP/MinC_C"/>
</dbReference>
<dbReference type="InterPro" id="IPR013033">
    <property type="entry name" value="MinC"/>
</dbReference>
<dbReference type="InterPro" id="IPR036145">
    <property type="entry name" value="MinC_C_sf"/>
</dbReference>
<dbReference type="InterPro" id="IPR007874">
    <property type="entry name" value="MinC_N"/>
</dbReference>
<dbReference type="InterPro" id="IPR005526">
    <property type="entry name" value="Septum_form_inhib_MinC_C"/>
</dbReference>
<dbReference type="NCBIfam" id="TIGR01222">
    <property type="entry name" value="minC"/>
    <property type="match status" value="1"/>
</dbReference>
<dbReference type="PANTHER" id="PTHR34108">
    <property type="entry name" value="SEPTUM SITE-DETERMINING PROTEIN MINC"/>
    <property type="match status" value="1"/>
</dbReference>
<dbReference type="PANTHER" id="PTHR34108:SF1">
    <property type="entry name" value="SEPTUM SITE-DETERMINING PROTEIN MINC"/>
    <property type="match status" value="1"/>
</dbReference>
<dbReference type="Pfam" id="PF03775">
    <property type="entry name" value="MinC_C"/>
    <property type="match status" value="1"/>
</dbReference>
<dbReference type="Pfam" id="PF05209">
    <property type="entry name" value="MinC_N"/>
    <property type="match status" value="1"/>
</dbReference>
<dbReference type="SUPFAM" id="SSF63848">
    <property type="entry name" value="Cell-division inhibitor MinC, C-terminal domain"/>
    <property type="match status" value="1"/>
</dbReference>
<accession>A0KXU2</accession>
<evidence type="ECO:0000255" key="1">
    <source>
        <dbReference type="HAMAP-Rule" id="MF_00267"/>
    </source>
</evidence>
<name>MINC_SHESA</name>
<keyword id="KW-0131">Cell cycle</keyword>
<keyword id="KW-0132">Cell division</keyword>
<keyword id="KW-0717">Septation</keyword>